<name>MUTL_STRSV</name>
<dbReference type="EMBL" id="CP000387">
    <property type="protein sequence ID" value="ABN45619.1"/>
    <property type="molecule type" value="Genomic_DNA"/>
</dbReference>
<dbReference type="RefSeq" id="WP_011837650.1">
    <property type="nucleotide sequence ID" value="NC_009009.1"/>
</dbReference>
<dbReference type="RefSeq" id="YP_001036169.1">
    <property type="nucleotide sequence ID" value="NC_009009.1"/>
</dbReference>
<dbReference type="SMR" id="A3CR14"/>
<dbReference type="STRING" id="388919.SSA_2257"/>
<dbReference type="KEGG" id="ssa:SSA_2257"/>
<dbReference type="PATRIC" id="fig|388919.9.peg.2140"/>
<dbReference type="eggNOG" id="COG0323">
    <property type="taxonomic scope" value="Bacteria"/>
</dbReference>
<dbReference type="HOGENOM" id="CLU_004131_4_1_9"/>
<dbReference type="OrthoDB" id="9763467at2"/>
<dbReference type="Proteomes" id="UP000002148">
    <property type="component" value="Chromosome"/>
</dbReference>
<dbReference type="GO" id="GO:0032300">
    <property type="term" value="C:mismatch repair complex"/>
    <property type="evidence" value="ECO:0007669"/>
    <property type="project" value="InterPro"/>
</dbReference>
<dbReference type="GO" id="GO:0005524">
    <property type="term" value="F:ATP binding"/>
    <property type="evidence" value="ECO:0007669"/>
    <property type="project" value="InterPro"/>
</dbReference>
<dbReference type="GO" id="GO:0016887">
    <property type="term" value="F:ATP hydrolysis activity"/>
    <property type="evidence" value="ECO:0007669"/>
    <property type="project" value="InterPro"/>
</dbReference>
<dbReference type="GO" id="GO:0140664">
    <property type="term" value="F:ATP-dependent DNA damage sensor activity"/>
    <property type="evidence" value="ECO:0007669"/>
    <property type="project" value="InterPro"/>
</dbReference>
<dbReference type="GO" id="GO:0030983">
    <property type="term" value="F:mismatched DNA binding"/>
    <property type="evidence" value="ECO:0007669"/>
    <property type="project" value="InterPro"/>
</dbReference>
<dbReference type="GO" id="GO:0006298">
    <property type="term" value="P:mismatch repair"/>
    <property type="evidence" value="ECO:0007669"/>
    <property type="project" value="UniProtKB-UniRule"/>
</dbReference>
<dbReference type="CDD" id="cd16926">
    <property type="entry name" value="HATPase_MutL-MLH-PMS-like"/>
    <property type="match status" value="1"/>
</dbReference>
<dbReference type="CDD" id="cd00782">
    <property type="entry name" value="MutL_Trans"/>
    <property type="match status" value="1"/>
</dbReference>
<dbReference type="FunFam" id="3.30.1370.100:FF:000004">
    <property type="entry name" value="DNA mismatch repair endonuclease MutL"/>
    <property type="match status" value="1"/>
</dbReference>
<dbReference type="FunFam" id="3.30.230.10:FF:000036">
    <property type="entry name" value="DNA mismatch repair endonuclease MutL"/>
    <property type="match status" value="1"/>
</dbReference>
<dbReference type="FunFam" id="3.30.565.10:FF:000003">
    <property type="entry name" value="DNA mismatch repair endonuclease MutL"/>
    <property type="match status" value="1"/>
</dbReference>
<dbReference type="Gene3D" id="3.30.230.10">
    <property type="match status" value="1"/>
</dbReference>
<dbReference type="Gene3D" id="3.30.565.10">
    <property type="entry name" value="Histidine kinase-like ATPase, C-terminal domain"/>
    <property type="match status" value="1"/>
</dbReference>
<dbReference type="Gene3D" id="3.30.1540.20">
    <property type="entry name" value="MutL, C-terminal domain, dimerisation subdomain"/>
    <property type="match status" value="1"/>
</dbReference>
<dbReference type="Gene3D" id="3.30.1370.100">
    <property type="entry name" value="MutL, C-terminal domain, regulatory subdomain"/>
    <property type="match status" value="1"/>
</dbReference>
<dbReference type="HAMAP" id="MF_00149">
    <property type="entry name" value="DNA_mis_repair"/>
    <property type="match status" value="1"/>
</dbReference>
<dbReference type="InterPro" id="IPR020667">
    <property type="entry name" value="DNA_mismatch_repair_MutL"/>
</dbReference>
<dbReference type="InterPro" id="IPR013507">
    <property type="entry name" value="DNA_mismatch_S5_2-like"/>
</dbReference>
<dbReference type="InterPro" id="IPR036890">
    <property type="entry name" value="HATPase_C_sf"/>
</dbReference>
<dbReference type="InterPro" id="IPR002099">
    <property type="entry name" value="MutL/Mlh/PMS"/>
</dbReference>
<dbReference type="InterPro" id="IPR038973">
    <property type="entry name" value="MutL/Mlh/Pms-like"/>
</dbReference>
<dbReference type="InterPro" id="IPR014790">
    <property type="entry name" value="MutL_C"/>
</dbReference>
<dbReference type="InterPro" id="IPR042120">
    <property type="entry name" value="MutL_C_dimsub"/>
</dbReference>
<dbReference type="InterPro" id="IPR042121">
    <property type="entry name" value="MutL_C_regsub"/>
</dbReference>
<dbReference type="InterPro" id="IPR037198">
    <property type="entry name" value="MutL_C_sf"/>
</dbReference>
<dbReference type="InterPro" id="IPR020568">
    <property type="entry name" value="Ribosomal_Su5_D2-typ_SF"/>
</dbReference>
<dbReference type="InterPro" id="IPR014721">
    <property type="entry name" value="Ribsml_uS5_D2-typ_fold_subgr"/>
</dbReference>
<dbReference type="NCBIfam" id="TIGR00585">
    <property type="entry name" value="mutl"/>
    <property type="match status" value="1"/>
</dbReference>
<dbReference type="NCBIfam" id="NF000950">
    <property type="entry name" value="PRK00095.1-3"/>
    <property type="match status" value="1"/>
</dbReference>
<dbReference type="PANTHER" id="PTHR10073">
    <property type="entry name" value="DNA MISMATCH REPAIR PROTEIN MLH, PMS, MUTL"/>
    <property type="match status" value="1"/>
</dbReference>
<dbReference type="PANTHER" id="PTHR10073:SF12">
    <property type="entry name" value="DNA MISMATCH REPAIR PROTEIN MLH1"/>
    <property type="match status" value="1"/>
</dbReference>
<dbReference type="Pfam" id="PF01119">
    <property type="entry name" value="DNA_mis_repair"/>
    <property type="match status" value="1"/>
</dbReference>
<dbReference type="Pfam" id="PF13589">
    <property type="entry name" value="HATPase_c_3"/>
    <property type="match status" value="1"/>
</dbReference>
<dbReference type="Pfam" id="PF08676">
    <property type="entry name" value="MutL_C"/>
    <property type="match status" value="1"/>
</dbReference>
<dbReference type="SMART" id="SM01340">
    <property type="entry name" value="DNA_mis_repair"/>
    <property type="match status" value="1"/>
</dbReference>
<dbReference type="SMART" id="SM00853">
    <property type="entry name" value="MutL_C"/>
    <property type="match status" value="1"/>
</dbReference>
<dbReference type="SUPFAM" id="SSF55874">
    <property type="entry name" value="ATPase domain of HSP90 chaperone/DNA topoisomerase II/histidine kinase"/>
    <property type="match status" value="1"/>
</dbReference>
<dbReference type="SUPFAM" id="SSF118116">
    <property type="entry name" value="DNA mismatch repair protein MutL"/>
    <property type="match status" value="1"/>
</dbReference>
<dbReference type="SUPFAM" id="SSF54211">
    <property type="entry name" value="Ribosomal protein S5 domain 2-like"/>
    <property type="match status" value="1"/>
</dbReference>
<gene>
    <name evidence="1" type="primary">mutL</name>
    <name type="ordered locus">SSA_2257</name>
</gene>
<feature type="chain" id="PRO_1000010094" description="DNA mismatch repair protein MutL">
    <location>
        <begin position="1"/>
        <end position="647"/>
    </location>
</feature>
<feature type="region of interest" description="Disordered" evidence="2">
    <location>
        <begin position="387"/>
        <end position="412"/>
    </location>
</feature>
<feature type="compositionally biased region" description="Basic and acidic residues" evidence="2">
    <location>
        <begin position="387"/>
        <end position="400"/>
    </location>
</feature>
<sequence length="647" mass="73224">MSKIIELPEILANQIAAGEVIERPSSVVKELVENSIDAGASQITIEIEEAGLKSIQVTDNGEGIDHEDVPLALRRHATSKIKKQADLFRIRTLGFRGEAIPSIASVSRFTIETATEAGRHGTLLVAQGGEIEEHVPTSSPVGTKIKIEDLFFNTPARLKYMKSQQAELSHIVDVINRLSLAHPEVAFTLISDGREMTRTAGSGNLRQAIAGIYGLATAKKMVEISASDLDFEVSGYVSLPELTRANRNYITILINGRYIKNFLLNRAILDGYGSKLMVGRFPLAVINIQIDPYLADVNVHPTKQEVRISKERELMALISQAIATSLKEQDLIPDALENLAKSTVKRASKPEQTSLPLKENRLYYDKKQNDFFLKPQVAEQQLSFEESAKPVHEATDEKAEPQSTSVKFAERKPVSYDQLDHPELDQASLERAVDKLEQEEKSSFPELEYFGQMHGTYLFAQGKGGLYIIDQHAAQERVKYEYYREKIGDVDNSQQQLLVPYIFEFPADDMLRIKQRMELLEDAGIFLEEYGANQFILREHPIWFKEEEIEAGIYEMCDMLLLTKEVSIKKYRAELAIMMSCKRSIKANHSLDDYSARDLLFQLSQCDNPYNCPHGRPVLVNFTKSDMEKMFRRIQENHTSLRELGKY</sequence>
<accession>A3CR14</accession>
<reference key="1">
    <citation type="journal article" date="2007" name="J. Bacteriol.">
        <title>Genome of the opportunistic pathogen Streptococcus sanguinis.</title>
        <authorList>
            <person name="Xu P."/>
            <person name="Alves J.M."/>
            <person name="Kitten T."/>
            <person name="Brown A."/>
            <person name="Chen Z."/>
            <person name="Ozaki L.S."/>
            <person name="Manque P."/>
            <person name="Ge X."/>
            <person name="Serrano M.G."/>
            <person name="Puiu D."/>
            <person name="Hendricks S."/>
            <person name="Wang Y."/>
            <person name="Chaplin M.D."/>
            <person name="Akan D."/>
            <person name="Paik S."/>
            <person name="Peterson D.L."/>
            <person name="Macrina F.L."/>
            <person name="Buck G.A."/>
        </authorList>
    </citation>
    <scope>NUCLEOTIDE SEQUENCE [LARGE SCALE GENOMIC DNA]</scope>
    <source>
        <strain>SK36</strain>
    </source>
</reference>
<protein>
    <recommendedName>
        <fullName evidence="1">DNA mismatch repair protein MutL</fullName>
    </recommendedName>
</protein>
<proteinExistence type="inferred from homology"/>
<keyword id="KW-0227">DNA damage</keyword>
<keyword id="KW-0234">DNA repair</keyword>
<keyword id="KW-1185">Reference proteome</keyword>
<evidence type="ECO:0000255" key="1">
    <source>
        <dbReference type="HAMAP-Rule" id="MF_00149"/>
    </source>
</evidence>
<evidence type="ECO:0000256" key="2">
    <source>
        <dbReference type="SAM" id="MobiDB-lite"/>
    </source>
</evidence>
<organism>
    <name type="scientific">Streptococcus sanguinis (strain SK36)</name>
    <dbReference type="NCBI Taxonomy" id="388919"/>
    <lineage>
        <taxon>Bacteria</taxon>
        <taxon>Bacillati</taxon>
        <taxon>Bacillota</taxon>
        <taxon>Bacilli</taxon>
        <taxon>Lactobacillales</taxon>
        <taxon>Streptococcaceae</taxon>
        <taxon>Streptococcus</taxon>
    </lineage>
</organism>
<comment type="function">
    <text evidence="1">This protein is involved in the repair of mismatches in DNA. It is required for dam-dependent methyl-directed DNA mismatch repair. May act as a 'molecular matchmaker', a protein that promotes the formation of a stable complex between two or more DNA-binding proteins in an ATP-dependent manner without itself being part of a final effector complex.</text>
</comment>
<comment type="similarity">
    <text evidence="1">Belongs to the DNA mismatch repair MutL/HexB family.</text>
</comment>